<accession>C1DBE8</accession>
<gene>
    <name type="primary">alr</name>
    <name type="ordered locus">LHK_00350</name>
</gene>
<keyword id="KW-0413">Isomerase</keyword>
<keyword id="KW-0663">Pyridoxal phosphate</keyword>
<keyword id="KW-1185">Reference proteome</keyword>
<proteinExistence type="inferred from homology"/>
<organism>
    <name type="scientific">Laribacter hongkongensis (strain HLHK9)</name>
    <dbReference type="NCBI Taxonomy" id="557598"/>
    <lineage>
        <taxon>Bacteria</taxon>
        <taxon>Pseudomonadati</taxon>
        <taxon>Pseudomonadota</taxon>
        <taxon>Betaproteobacteria</taxon>
        <taxon>Neisseriales</taxon>
        <taxon>Aquaspirillaceae</taxon>
        <taxon>Laribacter</taxon>
    </lineage>
</organism>
<evidence type="ECO:0000255" key="1">
    <source>
        <dbReference type="HAMAP-Rule" id="MF_01201"/>
    </source>
</evidence>
<sequence length="359" mass="38116">MTRPIRATLDLAAIRHNYQQAKACSPESFAFAVIKADAYGHGYEQVAAALAVWPTVLPSSTSSRARTLREAGLRQPILLLEGCFDRAELEEAARLQLTVPFHAAHQFDWLKQGSLPAPLEVMLKLNTGMNRLGFRPDEAPRAAAWLQARNDIRLAGLMTHFATADGDPGIAAQLSRFDEVNASLGLPSCVANSAALMRHPASRRQYVRPGIMLYGASPFADQSAAELGLRPAMRLEADIIGVQSLQAGDAVGYGATFVADRPMRIGVVACGYADGYPRVAPAGTPCAIGGQPARLVGRVSMDMLTIDLTSLPQAGVGDRVTLWGGDGVSIDDVATAAGTIGYELMCALAPRVPRRVVGA</sequence>
<name>ALR_LARHH</name>
<dbReference type="EC" id="5.1.1.1" evidence="1"/>
<dbReference type="EMBL" id="CP001154">
    <property type="protein sequence ID" value="ACO73345.1"/>
    <property type="molecule type" value="Genomic_DNA"/>
</dbReference>
<dbReference type="RefSeq" id="WP_012695839.1">
    <property type="nucleotide sequence ID" value="NC_012559.1"/>
</dbReference>
<dbReference type="SMR" id="C1DBE8"/>
<dbReference type="STRING" id="557598.LHK_00350"/>
<dbReference type="KEGG" id="lhk:LHK_00350"/>
<dbReference type="eggNOG" id="COG0787">
    <property type="taxonomic scope" value="Bacteria"/>
</dbReference>
<dbReference type="HOGENOM" id="CLU_028393_1_0_4"/>
<dbReference type="UniPathway" id="UPA00042">
    <property type="reaction ID" value="UER00497"/>
</dbReference>
<dbReference type="Proteomes" id="UP000002010">
    <property type="component" value="Chromosome"/>
</dbReference>
<dbReference type="GO" id="GO:0005829">
    <property type="term" value="C:cytosol"/>
    <property type="evidence" value="ECO:0007669"/>
    <property type="project" value="TreeGrafter"/>
</dbReference>
<dbReference type="GO" id="GO:0008784">
    <property type="term" value="F:alanine racemase activity"/>
    <property type="evidence" value="ECO:0007669"/>
    <property type="project" value="UniProtKB-UniRule"/>
</dbReference>
<dbReference type="GO" id="GO:0030170">
    <property type="term" value="F:pyridoxal phosphate binding"/>
    <property type="evidence" value="ECO:0007669"/>
    <property type="project" value="UniProtKB-UniRule"/>
</dbReference>
<dbReference type="GO" id="GO:0030632">
    <property type="term" value="P:D-alanine biosynthetic process"/>
    <property type="evidence" value="ECO:0007669"/>
    <property type="project" value="UniProtKB-UniRule"/>
</dbReference>
<dbReference type="CDD" id="cd06827">
    <property type="entry name" value="PLPDE_III_AR_proteobact"/>
    <property type="match status" value="1"/>
</dbReference>
<dbReference type="FunFam" id="3.20.20.10:FF:000002">
    <property type="entry name" value="Alanine racemase"/>
    <property type="match status" value="1"/>
</dbReference>
<dbReference type="Gene3D" id="3.20.20.10">
    <property type="entry name" value="Alanine racemase"/>
    <property type="match status" value="1"/>
</dbReference>
<dbReference type="Gene3D" id="2.40.37.10">
    <property type="entry name" value="Lyase, Ornithine Decarboxylase, Chain A, domain 1"/>
    <property type="match status" value="1"/>
</dbReference>
<dbReference type="HAMAP" id="MF_01201">
    <property type="entry name" value="Ala_racemase"/>
    <property type="match status" value="1"/>
</dbReference>
<dbReference type="InterPro" id="IPR000821">
    <property type="entry name" value="Ala_racemase"/>
</dbReference>
<dbReference type="InterPro" id="IPR009006">
    <property type="entry name" value="Ala_racemase/Decarboxylase_C"/>
</dbReference>
<dbReference type="InterPro" id="IPR011079">
    <property type="entry name" value="Ala_racemase_C"/>
</dbReference>
<dbReference type="InterPro" id="IPR001608">
    <property type="entry name" value="Ala_racemase_N"/>
</dbReference>
<dbReference type="InterPro" id="IPR020622">
    <property type="entry name" value="Ala_racemase_pyridoxalP-BS"/>
</dbReference>
<dbReference type="InterPro" id="IPR029066">
    <property type="entry name" value="PLP-binding_barrel"/>
</dbReference>
<dbReference type="NCBIfam" id="TIGR00492">
    <property type="entry name" value="alr"/>
    <property type="match status" value="1"/>
</dbReference>
<dbReference type="PANTHER" id="PTHR30511">
    <property type="entry name" value="ALANINE RACEMASE"/>
    <property type="match status" value="1"/>
</dbReference>
<dbReference type="PANTHER" id="PTHR30511:SF0">
    <property type="entry name" value="ALANINE RACEMASE, CATABOLIC-RELATED"/>
    <property type="match status" value="1"/>
</dbReference>
<dbReference type="Pfam" id="PF00842">
    <property type="entry name" value="Ala_racemase_C"/>
    <property type="match status" value="1"/>
</dbReference>
<dbReference type="Pfam" id="PF01168">
    <property type="entry name" value="Ala_racemase_N"/>
    <property type="match status" value="1"/>
</dbReference>
<dbReference type="PRINTS" id="PR00992">
    <property type="entry name" value="ALARACEMASE"/>
</dbReference>
<dbReference type="SMART" id="SM01005">
    <property type="entry name" value="Ala_racemase_C"/>
    <property type="match status" value="1"/>
</dbReference>
<dbReference type="SUPFAM" id="SSF50621">
    <property type="entry name" value="Alanine racemase C-terminal domain-like"/>
    <property type="match status" value="1"/>
</dbReference>
<dbReference type="SUPFAM" id="SSF51419">
    <property type="entry name" value="PLP-binding barrel"/>
    <property type="match status" value="1"/>
</dbReference>
<dbReference type="PROSITE" id="PS00395">
    <property type="entry name" value="ALANINE_RACEMASE"/>
    <property type="match status" value="1"/>
</dbReference>
<reference key="1">
    <citation type="journal article" date="2009" name="PLoS Genet.">
        <title>The complete genome and proteome of Laribacter hongkongensis reveal potential mechanisms for adaptations to different temperatures and habitats.</title>
        <authorList>
            <person name="Woo P.C.Y."/>
            <person name="Lau S.K.P."/>
            <person name="Tse H."/>
            <person name="Teng J.L.L."/>
            <person name="Curreem S.O."/>
            <person name="Tsang A.K.L."/>
            <person name="Fan R.Y.Y."/>
            <person name="Wong G.K.M."/>
            <person name="Huang Y."/>
            <person name="Loman N.J."/>
            <person name="Snyder L.A.S."/>
            <person name="Cai J.J."/>
            <person name="Huang J.-D."/>
            <person name="Mak W."/>
            <person name="Pallen M.J."/>
            <person name="Lok S."/>
            <person name="Yuen K.-Y."/>
        </authorList>
    </citation>
    <scope>NUCLEOTIDE SEQUENCE [LARGE SCALE GENOMIC DNA]</scope>
    <source>
        <strain>HLHK9</strain>
    </source>
</reference>
<protein>
    <recommendedName>
        <fullName evidence="1">Alanine racemase</fullName>
        <ecNumber evidence="1">5.1.1.1</ecNumber>
    </recommendedName>
</protein>
<feature type="chain" id="PRO_1000164601" description="Alanine racemase">
    <location>
        <begin position="1"/>
        <end position="359"/>
    </location>
</feature>
<feature type="active site" description="Proton acceptor; specific for D-alanine" evidence="1">
    <location>
        <position position="35"/>
    </location>
</feature>
<feature type="active site" description="Proton acceptor; specific for L-alanine" evidence="1">
    <location>
        <position position="253"/>
    </location>
</feature>
<feature type="binding site" evidence="1">
    <location>
        <position position="131"/>
    </location>
    <ligand>
        <name>substrate</name>
    </ligand>
</feature>
<feature type="binding site" evidence="1">
    <location>
        <position position="301"/>
    </location>
    <ligand>
        <name>substrate</name>
    </ligand>
</feature>
<feature type="modified residue" description="N6-(pyridoxal phosphate)lysine" evidence="1">
    <location>
        <position position="35"/>
    </location>
</feature>
<comment type="function">
    <text evidence="1">Catalyzes the interconversion of L-alanine and D-alanine. May also act on other amino acids.</text>
</comment>
<comment type="catalytic activity">
    <reaction evidence="1">
        <text>L-alanine = D-alanine</text>
        <dbReference type="Rhea" id="RHEA:20249"/>
        <dbReference type="ChEBI" id="CHEBI:57416"/>
        <dbReference type="ChEBI" id="CHEBI:57972"/>
        <dbReference type="EC" id="5.1.1.1"/>
    </reaction>
</comment>
<comment type="cofactor">
    <cofactor evidence="1">
        <name>pyridoxal 5'-phosphate</name>
        <dbReference type="ChEBI" id="CHEBI:597326"/>
    </cofactor>
</comment>
<comment type="pathway">
    <text evidence="1">Amino-acid biosynthesis; D-alanine biosynthesis; D-alanine from L-alanine: step 1/1.</text>
</comment>
<comment type="similarity">
    <text evidence="1">Belongs to the alanine racemase family.</text>
</comment>